<accession>Q550R2</accession>
<accession>O15814</accession>
<accession>Q8MNG7</accession>
<feature type="chain" id="PRO_0000312778" description="Cortexillin-2">
    <location>
        <begin position="1"/>
        <end position="441"/>
    </location>
</feature>
<feature type="domain" description="Calponin-homology (CH) 1" evidence="3">
    <location>
        <begin position="9"/>
        <end position="117"/>
    </location>
</feature>
<feature type="domain" description="Calponin-homology (CH) 2" evidence="3">
    <location>
        <begin position="126"/>
        <end position="231"/>
    </location>
</feature>
<feature type="region of interest" description="Actin-binding">
    <location>
        <begin position="1"/>
        <end position="229"/>
    </location>
</feature>
<feature type="coiled-coil region" evidence="2">
    <location>
        <begin position="229"/>
        <end position="362"/>
    </location>
</feature>
<feature type="coiled-coil region" evidence="2">
    <location>
        <begin position="406"/>
        <end position="430"/>
    </location>
</feature>
<dbReference type="EMBL" id="L46371">
    <property type="protein sequence ID" value="AAB62274.1"/>
    <property type="molecule type" value="mRNA"/>
</dbReference>
<dbReference type="EMBL" id="AAFI02000019">
    <property type="protein sequence ID" value="EAL68948.1"/>
    <property type="molecule type" value="Genomic_DNA"/>
</dbReference>
<dbReference type="RefSeq" id="XP_642870.1">
    <property type="nucleotide sequence ID" value="XM_637778.1"/>
</dbReference>
<dbReference type="SMR" id="Q550R2"/>
<dbReference type="FunCoup" id="Q550R2">
    <property type="interactions" value="4"/>
</dbReference>
<dbReference type="IntAct" id="Q550R2">
    <property type="interactions" value="2"/>
</dbReference>
<dbReference type="STRING" id="44689.Q550R2"/>
<dbReference type="PaxDb" id="44689-DDB0185031"/>
<dbReference type="EnsemblProtists" id="EAL68948">
    <property type="protein sequence ID" value="EAL68948"/>
    <property type="gene ID" value="DDB_G0276893"/>
</dbReference>
<dbReference type="GeneID" id="8620736"/>
<dbReference type="KEGG" id="ddi:DDB_G0276893"/>
<dbReference type="dictyBase" id="DDB_G0276893">
    <property type="gene designation" value="ctxB"/>
</dbReference>
<dbReference type="VEuPathDB" id="AmoebaDB:DDB_G0276893"/>
<dbReference type="eggNOG" id="KOG0035">
    <property type="taxonomic scope" value="Eukaryota"/>
</dbReference>
<dbReference type="HOGENOM" id="CLU_621778_0_0_1"/>
<dbReference type="InParanoid" id="Q550R2"/>
<dbReference type="OMA" id="AWCKKTT"/>
<dbReference type="PhylomeDB" id="Q550R2"/>
<dbReference type="PRO" id="PR:Q550R2"/>
<dbReference type="Proteomes" id="UP000002195">
    <property type="component" value="Chromosome 2"/>
</dbReference>
<dbReference type="GO" id="GO:0015629">
    <property type="term" value="C:actin cytoskeleton"/>
    <property type="evidence" value="ECO:0000314"/>
    <property type="project" value="dictyBase"/>
</dbReference>
<dbReference type="GO" id="GO:0005938">
    <property type="term" value="C:cell cortex"/>
    <property type="evidence" value="ECO:0000314"/>
    <property type="project" value="dictyBase"/>
</dbReference>
<dbReference type="GO" id="GO:0031252">
    <property type="term" value="C:cell leading edge"/>
    <property type="evidence" value="ECO:0000314"/>
    <property type="project" value="dictyBase"/>
</dbReference>
<dbReference type="GO" id="GO:0031254">
    <property type="term" value="C:cell trailing edge"/>
    <property type="evidence" value="ECO:0000314"/>
    <property type="project" value="dictyBase"/>
</dbReference>
<dbReference type="GO" id="GO:0032154">
    <property type="term" value="C:cleavage furrow"/>
    <property type="evidence" value="ECO:0000314"/>
    <property type="project" value="dictyBase"/>
</dbReference>
<dbReference type="GO" id="GO:0045335">
    <property type="term" value="C:phagocytic vesicle"/>
    <property type="evidence" value="ECO:0007005"/>
    <property type="project" value="dictyBase"/>
</dbReference>
<dbReference type="GO" id="GO:0051015">
    <property type="term" value="F:actin filament binding"/>
    <property type="evidence" value="ECO:0000250"/>
    <property type="project" value="dictyBase"/>
</dbReference>
<dbReference type="GO" id="GO:0045294">
    <property type="term" value="F:alpha-catenin binding"/>
    <property type="evidence" value="ECO:0000353"/>
    <property type="project" value="dictyBase"/>
</dbReference>
<dbReference type="GO" id="GO:0019887">
    <property type="term" value="F:protein kinase regulator activity"/>
    <property type="evidence" value="ECO:0000316"/>
    <property type="project" value="dictyBase"/>
</dbReference>
<dbReference type="GO" id="GO:0140582">
    <property type="term" value="P:adenylate cyclase-activating G protein-coupled cAMP receptor signaling pathway"/>
    <property type="evidence" value="ECO:0000316"/>
    <property type="project" value="dictyBase"/>
</dbReference>
<dbReference type="GO" id="GO:0031152">
    <property type="term" value="P:aggregation involved in sorocarp development"/>
    <property type="evidence" value="ECO:0000316"/>
    <property type="project" value="dictyBase"/>
</dbReference>
<dbReference type="GO" id="GO:0032060">
    <property type="term" value="P:bleb assembly"/>
    <property type="evidence" value="ECO:0000316"/>
    <property type="project" value="dictyBase"/>
</dbReference>
<dbReference type="GO" id="GO:0000902">
    <property type="term" value="P:cell morphogenesis"/>
    <property type="evidence" value="ECO:0000315"/>
    <property type="project" value="dictyBase"/>
</dbReference>
<dbReference type="GO" id="GO:0043327">
    <property type="term" value="P:chemotaxis to cAMP"/>
    <property type="evidence" value="ECO:0000315"/>
    <property type="project" value="dictyBase"/>
</dbReference>
<dbReference type="GO" id="GO:0030866">
    <property type="term" value="P:cortical actin cytoskeleton organization"/>
    <property type="evidence" value="ECO:0000316"/>
    <property type="project" value="dictyBase"/>
</dbReference>
<dbReference type="GO" id="GO:0000281">
    <property type="term" value="P:mitotic cytokinesis"/>
    <property type="evidence" value="ECO:0000316"/>
    <property type="project" value="dictyBase"/>
</dbReference>
<dbReference type="GO" id="GO:1904777">
    <property type="term" value="P:negative regulation of protein localization to cell cortex"/>
    <property type="evidence" value="ECO:0000316"/>
    <property type="project" value="dictyBase"/>
</dbReference>
<dbReference type="GO" id="GO:0010628">
    <property type="term" value="P:positive regulation of gene expression"/>
    <property type="evidence" value="ECO:0000315"/>
    <property type="project" value="dictyBase"/>
</dbReference>
<dbReference type="GO" id="GO:0043520">
    <property type="term" value="P:regulation of myosin II filament assembly"/>
    <property type="evidence" value="ECO:0000316"/>
    <property type="project" value="dictyBase"/>
</dbReference>
<dbReference type="CDD" id="cd21225">
    <property type="entry name" value="CH_CTX_rpt1"/>
    <property type="match status" value="1"/>
</dbReference>
<dbReference type="CDD" id="cd21226">
    <property type="entry name" value="CH_CTX_rpt2"/>
    <property type="match status" value="1"/>
</dbReference>
<dbReference type="FunFam" id="1.10.418.10:FF:000138">
    <property type="entry name" value="Cortexillin I"/>
    <property type="match status" value="1"/>
</dbReference>
<dbReference type="Gene3D" id="1.20.5.340">
    <property type="match status" value="1"/>
</dbReference>
<dbReference type="Gene3D" id="1.10.418.10">
    <property type="entry name" value="Calponin-like domain"/>
    <property type="match status" value="2"/>
</dbReference>
<dbReference type="InterPro" id="IPR001589">
    <property type="entry name" value="Actinin_actin-bd_CS"/>
</dbReference>
<dbReference type="InterPro" id="IPR001715">
    <property type="entry name" value="CH_dom"/>
</dbReference>
<dbReference type="InterPro" id="IPR036872">
    <property type="entry name" value="CH_dom_sf"/>
</dbReference>
<dbReference type="InterPro" id="IPR015383">
    <property type="entry name" value="Cortexillin-I_coiled-coil"/>
</dbReference>
<dbReference type="PANTHER" id="PTHR11915">
    <property type="entry name" value="SPECTRIN/FILAMIN RELATED CYTOSKELETAL PROTEIN"/>
    <property type="match status" value="1"/>
</dbReference>
<dbReference type="Pfam" id="PF00307">
    <property type="entry name" value="CH"/>
    <property type="match status" value="2"/>
</dbReference>
<dbReference type="Pfam" id="PF09304">
    <property type="entry name" value="Cortex-I_coil"/>
    <property type="match status" value="1"/>
</dbReference>
<dbReference type="SMART" id="SM00033">
    <property type="entry name" value="CH"/>
    <property type="match status" value="2"/>
</dbReference>
<dbReference type="SUPFAM" id="SSF47576">
    <property type="entry name" value="Calponin-homology domain, CH-domain"/>
    <property type="match status" value="1"/>
</dbReference>
<dbReference type="SUPFAM" id="SSF58018">
    <property type="entry name" value="Coiled-coil dimerization domain from cortexillin I"/>
    <property type="match status" value="1"/>
</dbReference>
<dbReference type="PROSITE" id="PS00019">
    <property type="entry name" value="ACTININ_1"/>
    <property type="match status" value="1"/>
</dbReference>
<dbReference type="PROSITE" id="PS50021">
    <property type="entry name" value="CH"/>
    <property type="match status" value="2"/>
</dbReference>
<proteinExistence type="evidence at protein level"/>
<sequence>MDLNKEWEKVQEMAFTSWVNSVLEKRGCDKISDVSTDLSDGVKLIYFLESVSGKKFPKKFDLEPKTRIMRVQNLHLAMLFIDEDLKIKVQGVAAEEFVDNNKKMILGFLWTLYRKYRISVINEGDKSSEEGLLAWCKKTTEGYNNVNITGFKSSFRDGHGFLALAHKYDPTVFKYDEYEGHDNIARLNAAFDFAEKGLGIPKLLEAESLSKGNVDERSIVLYTSLFFHAFRAKEEREALEASQNSLNNKLASLEQSLEGEKHSQEELVKQKKDLEDALNKIREQNDNRNSRITDLQSKIDDALRGLDDEKLAKLDLESRLAKCEKDKAILELKLAEILDEKDRLEKKIDEDKKRAEAERLGLGLIRQHLAAQFSDIHKWQSFLEHPETVPYTGTPVDLDSELSSLSFEEQAKKLASKLESENILIEKYLNGKEEAKAAAKK</sequence>
<protein>
    <recommendedName>
        <fullName>Cortexillin-2</fullName>
    </recommendedName>
    <alternativeName>
        <fullName>Cortexillin II</fullName>
    </alternativeName>
</protein>
<comment type="function">
    <text evidence="1">Actin-bundling protein. When linked to F-actin the actin filaments form preferentially anti-parallel bundles that associate into meshworks. Plays a major role in cytokinesis. Negatively regulates cortical localization of rapgap1 (By similarity).</text>
</comment>
<comment type="subunit">
    <text evidence="1">Homodimer; parallel.</text>
</comment>
<comment type="interaction">
    <interactant intactId="EBI-1811057">
        <id>Q550R2</id>
    </interactant>
    <interactant intactId="EBI-1810875">
        <id>Q54HG2</id>
        <label>ctxA</label>
    </interactant>
    <organismsDiffer>false</organismsDiffer>
    <experiments>2</experiments>
</comment>
<comment type="subcellular location">
    <subcellularLocation>
        <location evidence="1">Cytoplasm</location>
        <location evidence="1">Cytoskeleton</location>
    </subcellularLocation>
</comment>
<comment type="similarity">
    <text evidence="4">Belongs to the cortexillin family.</text>
</comment>
<organism>
    <name type="scientific">Dictyostelium discoideum</name>
    <name type="common">Social amoeba</name>
    <dbReference type="NCBI Taxonomy" id="44689"/>
    <lineage>
        <taxon>Eukaryota</taxon>
        <taxon>Amoebozoa</taxon>
        <taxon>Evosea</taxon>
        <taxon>Eumycetozoa</taxon>
        <taxon>Dictyostelia</taxon>
        <taxon>Dictyosteliales</taxon>
        <taxon>Dictyosteliaceae</taxon>
        <taxon>Dictyostelium</taxon>
    </lineage>
</organism>
<name>CTXB_DICDI</name>
<keyword id="KW-0009">Actin-binding</keyword>
<keyword id="KW-0175">Coiled coil</keyword>
<keyword id="KW-0963">Cytoplasm</keyword>
<keyword id="KW-0206">Cytoskeleton</keyword>
<keyword id="KW-1185">Reference proteome</keyword>
<keyword id="KW-0677">Repeat</keyword>
<gene>
    <name type="primary">ctxB</name>
    <name type="ORF">DDB_G0276893</name>
</gene>
<reference key="1">
    <citation type="journal article" date="1996" name="Cell">
        <title>Cortexillins, major determinants of cell shape and size, are actin-bundling proteins with a parallel coiled-coil tail.</title>
        <authorList>
            <person name="Faix J."/>
            <person name="Steinmetz M."/>
            <person name="Boves H."/>
            <person name="Kammerer R.A."/>
            <person name="Lottspeich F."/>
            <person name="Mintert U."/>
            <person name="Murphy J."/>
            <person name="Stock A."/>
            <person name="Aebi U."/>
            <person name="Gerisch G."/>
        </authorList>
    </citation>
    <scope>NUCLEOTIDE SEQUENCE [MRNA]</scope>
    <source>
        <strain>AX3</strain>
    </source>
</reference>
<reference key="2">
    <citation type="journal article" date="2002" name="Nature">
        <title>Sequence and analysis of chromosome 2 of Dictyostelium discoideum.</title>
        <authorList>
            <person name="Gloeckner G."/>
            <person name="Eichinger L."/>
            <person name="Szafranski K."/>
            <person name="Pachebat J.A."/>
            <person name="Bankier A.T."/>
            <person name="Dear P.H."/>
            <person name="Lehmann R."/>
            <person name="Baumgart C."/>
            <person name="Parra G."/>
            <person name="Abril J.F."/>
            <person name="Guigo R."/>
            <person name="Kumpf K."/>
            <person name="Tunggal B."/>
            <person name="Cox E.C."/>
            <person name="Quail M.A."/>
            <person name="Platzer M."/>
            <person name="Rosenthal A."/>
            <person name="Noegel A.A."/>
        </authorList>
    </citation>
    <scope>NUCLEOTIDE SEQUENCE [LARGE SCALE GENOMIC DNA]</scope>
    <source>
        <strain>AX4</strain>
    </source>
</reference>
<reference key="3">
    <citation type="journal article" date="2005" name="Nature">
        <title>The genome of the social amoeba Dictyostelium discoideum.</title>
        <authorList>
            <person name="Eichinger L."/>
            <person name="Pachebat J.A."/>
            <person name="Gloeckner G."/>
            <person name="Rajandream M.A."/>
            <person name="Sucgang R."/>
            <person name="Berriman M."/>
            <person name="Song J."/>
            <person name="Olsen R."/>
            <person name="Szafranski K."/>
            <person name="Xu Q."/>
            <person name="Tunggal B."/>
            <person name="Kummerfeld S."/>
            <person name="Madera M."/>
            <person name="Konfortov B.A."/>
            <person name="Rivero F."/>
            <person name="Bankier A.T."/>
            <person name="Lehmann R."/>
            <person name="Hamlin N."/>
            <person name="Davies R."/>
            <person name="Gaudet P."/>
            <person name="Fey P."/>
            <person name="Pilcher K."/>
            <person name="Chen G."/>
            <person name="Saunders D."/>
            <person name="Sodergren E.J."/>
            <person name="Davis P."/>
            <person name="Kerhornou A."/>
            <person name="Nie X."/>
            <person name="Hall N."/>
            <person name="Anjard C."/>
            <person name="Hemphill L."/>
            <person name="Bason N."/>
            <person name="Farbrother P."/>
            <person name="Desany B."/>
            <person name="Just E."/>
            <person name="Morio T."/>
            <person name="Rost R."/>
            <person name="Churcher C.M."/>
            <person name="Cooper J."/>
            <person name="Haydock S."/>
            <person name="van Driessche N."/>
            <person name="Cronin A."/>
            <person name="Goodhead I."/>
            <person name="Muzny D.M."/>
            <person name="Mourier T."/>
            <person name="Pain A."/>
            <person name="Lu M."/>
            <person name="Harper D."/>
            <person name="Lindsay R."/>
            <person name="Hauser H."/>
            <person name="James K.D."/>
            <person name="Quiles M."/>
            <person name="Madan Babu M."/>
            <person name="Saito T."/>
            <person name="Buchrieser C."/>
            <person name="Wardroper A."/>
            <person name="Felder M."/>
            <person name="Thangavelu M."/>
            <person name="Johnson D."/>
            <person name="Knights A."/>
            <person name="Loulseged H."/>
            <person name="Mungall K.L."/>
            <person name="Oliver K."/>
            <person name="Price C."/>
            <person name="Quail M.A."/>
            <person name="Urushihara H."/>
            <person name="Hernandez J."/>
            <person name="Rabbinowitsch E."/>
            <person name="Steffen D."/>
            <person name="Sanders M."/>
            <person name="Ma J."/>
            <person name="Kohara Y."/>
            <person name="Sharp S."/>
            <person name="Simmonds M.N."/>
            <person name="Spiegler S."/>
            <person name="Tivey A."/>
            <person name="Sugano S."/>
            <person name="White B."/>
            <person name="Walker D."/>
            <person name="Woodward J.R."/>
            <person name="Winckler T."/>
            <person name="Tanaka Y."/>
            <person name="Shaulsky G."/>
            <person name="Schleicher M."/>
            <person name="Weinstock G.M."/>
            <person name="Rosenthal A."/>
            <person name="Cox E.C."/>
            <person name="Chisholm R.L."/>
            <person name="Gibbs R.A."/>
            <person name="Loomis W.F."/>
            <person name="Platzer M."/>
            <person name="Kay R.R."/>
            <person name="Williams J.G."/>
            <person name="Dear P.H."/>
            <person name="Noegel A.A."/>
            <person name="Barrell B.G."/>
            <person name="Kuspa A."/>
        </authorList>
    </citation>
    <scope>NUCLEOTIDE SEQUENCE [LARGE SCALE GENOMIC DNA]</scope>
    <source>
        <strain>AX4</strain>
    </source>
</reference>
<evidence type="ECO:0000250" key="1"/>
<evidence type="ECO:0000255" key="2"/>
<evidence type="ECO:0000255" key="3">
    <source>
        <dbReference type="PROSITE-ProRule" id="PRU00044"/>
    </source>
</evidence>
<evidence type="ECO:0000305" key="4"/>